<organism>
    <name type="scientific">Bacillus cereus (strain G9842)</name>
    <dbReference type="NCBI Taxonomy" id="405531"/>
    <lineage>
        <taxon>Bacteria</taxon>
        <taxon>Bacillati</taxon>
        <taxon>Bacillota</taxon>
        <taxon>Bacilli</taxon>
        <taxon>Bacillales</taxon>
        <taxon>Bacillaceae</taxon>
        <taxon>Bacillus</taxon>
        <taxon>Bacillus cereus group</taxon>
    </lineage>
</organism>
<sequence length="382" mass="42111">MYIAGVMSGTSLDGIDVALVHIEGSGVDSKIELIHFTTVPFCNDMKNEIQQALSIETSNVQLICSLNFKLGLCFANAVKEVCKEANFPLRQLDLIGSHGQTIYHQPKQEGNIISSTLQIGEPAVIAYETNTTVISNFRTMDMAAGGQGAPLVPYSEIILYRHQTKNRLLQNIGGIGNVTVVPSKRSNESVIAFDTGPGNMIIDEVCQRLFQLSYDQNGKIAKQGVVVDEILTYCMNHPFLNVKPPKSTGREQFGEAFVTELLNRFEKHSRENILATVTMFTASSIVHHYQEFIFPYYEIDEVILGGGGSYNRTLVEMIRFGLKEEKCKIFTQEDLGYSSAAKEAIAFAILANETYHRNPSNVPSATGAKQSVVLGNITFPPI</sequence>
<feature type="chain" id="PRO_1000214155" description="Anhydro-N-acetylmuramic acid kinase">
    <location>
        <begin position="1"/>
        <end position="382"/>
    </location>
</feature>
<feature type="binding site" evidence="1">
    <location>
        <begin position="9"/>
        <end position="16"/>
    </location>
    <ligand>
        <name>ATP</name>
        <dbReference type="ChEBI" id="CHEBI:30616"/>
    </ligand>
</feature>
<accession>B7IX20</accession>
<evidence type="ECO:0000255" key="1">
    <source>
        <dbReference type="HAMAP-Rule" id="MF_01270"/>
    </source>
</evidence>
<proteinExistence type="inferred from homology"/>
<reference key="1">
    <citation type="submission" date="2008-10" db="EMBL/GenBank/DDBJ databases">
        <title>Genome sequence of Bacillus cereus G9842.</title>
        <authorList>
            <person name="Dodson R.J."/>
            <person name="Durkin A.S."/>
            <person name="Rosovitz M.J."/>
            <person name="Rasko D.A."/>
            <person name="Hoffmaster A."/>
            <person name="Ravel J."/>
            <person name="Sutton G."/>
        </authorList>
    </citation>
    <scope>NUCLEOTIDE SEQUENCE [LARGE SCALE GENOMIC DNA]</scope>
    <source>
        <strain>G9842</strain>
    </source>
</reference>
<dbReference type="EC" id="2.7.1.170" evidence="1"/>
<dbReference type="EMBL" id="CP001186">
    <property type="protein sequence ID" value="ACK94977.1"/>
    <property type="molecule type" value="Genomic_DNA"/>
</dbReference>
<dbReference type="RefSeq" id="WP_000274969.1">
    <property type="nucleotide sequence ID" value="NC_011772.1"/>
</dbReference>
<dbReference type="SMR" id="B7IX20"/>
<dbReference type="KEGG" id="bcg:BCG9842_B2910"/>
<dbReference type="HOGENOM" id="CLU_038782_1_0_9"/>
<dbReference type="UniPathway" id="UPA00343"/>
<dbReference type="UniPathway" id="UPA00544"/>
<dbReference type="Proteomes" id="UP000006744">
    <property type="component" value="Chromosome"/>
</dbReference>
<dbReference type="GO" id="GO:0005524">
    <property type="term" value="F:ATP binding"/>
    <property type="evidence" value="ECO:0007669"/>
    <property type="project" value="UniProtKB-UniRule"/>
</dbReference>
<dbReference type="GO" id="GO:0016301">
    <property type="term" value="F:kinase activity"/>
    <property type="evidence" value="ECO:0007669"/>
    <property type="project" value="UniProtKB-KW"/>
</dbReference>
<dbReference type="GO" id="GO:0016773">
    <property type="term" value="F:phosphotransferase activity, alcohol group as acceptor"/>
    <property type="evidence" value="ECO:0007669"/>
    <property type="project" value="UniProtKB-UniRule"/>
</dbReference>
<dbReference type="GO" id="GO:0097175">
    <property type="term" value="P:1,6-anhydro-N-acetyl-beta-muramic acid catabolic process"/>
    <property type="evidence" value="ECO:0007669"/>
    <property type="project" value="UniProtKB-UniRule"/>
</dbReference>
<dbReference type="GO" id="GO:0006040">
    <property type="term" value="P:amino sugar metabolic process"/>
    <property type="evidence" value="ECO:0007669"/>
    <property type="project" value="InterPro"/>
</dbReference>
<dbReference type="GO" id="GO:0009254">
    <property type="term" value="P:peptidoglycan turnover"/>
    <property type="evidence" value="ECO:0007669"/>
    <property type="project" value="UniProtKB-UniRule"/>
</dbReference>
<dbReference type="CDD" id="cd24050">
    <property type="entry name" value="ASKHA_NBD_ANMK"/>
    <property type="match status" value="1"/>
</dbReference>
<dbReference type="Gene3D" id="3.30.420.40">
    <property type="match status" value="2"/>
</dbReference>
<dbReference type="HAMAP" id="MF_01270">
    <property type="entry name" value="AnhMurNAc_kinase"/>
    <property type="match status" value="1"/>
</dbReference>
<dbReference type="InterPro" id="IPR005338">
    <property type="entry name" value="Anhydro_N_Ac-Mur_kinase"/>
</dbReference>
<dbReference type="InterPro" id="IPR043129">
    <property type="entry name" value="ATPase_NBD"/>
</dbReference>
<dbReference type="NCBIfam" id="NF007142">
    <property type="entry name" value="PRK09585.2-1"/>
    <property type="match status" value="1"/>
</dbReference>
<dbReference type="NCBIfam" id="NF007148">
    <property type="entry name" value="PRK09585.3-2"/>
    <property type="match status" value="1"/>
</dbReference>
<dbReference type="PANTHER" id="PTHR30605">
    <property type="entry name" value="ANHYDRO-N-ACETYLMURAMIC ACID KINASE"/>
    <property type="match status" value="1"/>
</dbReference>
<dbReference type="PANTHER" id="PTHR30605:SF0">
    <property type="entry name" value="ANHYDRO-N-ACETYLMURAMIC ACID KINASE"/>
    <property type="match status" value="1"/>
</dbReference>
<dbReference type="Pfam" id="PF03702">
    <property type="entry name" value="AnmK"/>
    <property type="match status" value="1"/>
</dbReference>
<dbReference type="SUPFAM" id="SSF53067">
    <property type="entry name" value="Actin-like ATPase domain"/>
    <property type="match status" value="1"/>
</dbReference>
<protein>
    <recommendedName>
        <fullName evidence="1">Anhydro-N-acetylmuramic acid kinase</fullName>
        <ecNumber evidence="1">2.7.1.170</ecNumber>
    </recommendedName>
    <alternativeName>
        <fullName evidence="1">AnhMurNAc kinase</fullName>
    </alternativeName>
</protein>
<name>ANMK_BACC2</name>
<keyword id="KW-0067">ATP-binding</keyword>
<keyword id="KW-0119">Carbohydrate metabolism</keyword>
<keyword id="KW-0418">Kinase</keyword>
<keyword id="KW-0547">Nucleotide-binding</keyword>
<keyword id="KW-0808">Transferase</keyword>
<comment type="function">
    <text evidence="1">Catalyzes the specific phosphorylation of 1,6-anhydro-N-acetylmuramic acid (anhMurNAc) with the simultaneous cleavage of the 1,6-anhydro ring, generating MurNAc-6-P. Is required for the utilization of anhMurNAc either imported from the medium or derived from its own cell wall murein, and thus plays a role in cell wall recycling.</text>
</comment>
<comment type="catalytic activity">
    <reaction evidence="1">
        <text>1,6-anhydro-N-acetyl-beta-muramate + ATP + H2O = N-acetyl-D-muramate 6-phosphate + ADP + H(+)</text>
        <dbReference type="Rhea" id="RHEA:24952"/>
        <dbReference type="ChEBI" id="CHEBI:15377"/>
        <dbReference type="ChEBI" id="CHEBI:15378"/>
        <dbReference type="ChEBI" id="CHEBI:30616"/>
        <dbReference type="ChEBI" id="CHEBI:58690"/>
        <dbReference type="ChEBI" id="CHEBI:58722"/>
        <dbReference type="ChEBI" id="CHEBI:456216"/>
        <dbReference type="EC" id="2.7.1.170"/>
    </reaction>
</comment>
<comment type="pathway">
    <text evidence="1">Amino-sugar metabolism; 1,6-anhydro-N-acetylmuramate degradation.</text>
</comment>
<comment type="pathway">
    <text evidence="1">Cell wall biogenesis; peptidoglycan recycling.</text>
</comment>
<comment type="similarity">
    <text evidence="1">Belongs to the anhydro-N-acetylmuramic acid kinase family.</text>
</comment>
<gene>
    <name evidence="1" type="primary">anmK</name>
    <name type="ordered locus">BCG9842_B2910</name>
</gene>